<sequence>MAQSSQLAERISRLSHALESGLYERQEAIRLCLLAALSGESVFLLGPPGIAKSLIARRLKFAFRHARAFEYLMTRFSTPEEVFGPLSIQALKEEGRYQRMTGGYLPEAEIVFLDEIWKAGPAILNTLLTAINERRFRNGDREDSIPMRLLVTASNELPDADSSLEALYDRMLIRLWLDRVQEKQNFRSLLISRQNENHNPVAENLSITDEEFHQWQPLIDKITLPDHCFELIFQLRQRLSALEHAPYVSDRRWKKALRLLQASAFFSGRDEITPIDLILLKDCLWHDLNSFKLLQQQLEQLLTEQGYQQQSLLMKLQDINSKWLQHQQQQSDHQALTVVKQSGMFSRKAQYALPDNLTDSTLTLLLQKPLNLHDIQVNHLQVDKEALAQWLNKGGALRAKLNGVGYAQSIDAEIDDQLHIIILDVSRQPSTLSLPGATTTSVPPELLLALTKLESTLAEQRRLFSQHQPCLFTPSSWLAKIEASLLQVVEQLQFQQIQFQQRQFQQQKHSGH</sequence>
<gene>
    <name evidence="1" type="primary">ravA</name>
    <name type="ordered locus">YPK_4212</name>
</gene>
<organism>
    <name type="scientific">Yersinia pseudotuberculosis serotype O:3 (strain YPIII)</name>
    <dbReference type="NCBI Taxonomy" id="502800"/>
    <lineage>
        <taxon>Bacteria</taxon>
        <taxon>Pseudomonadati</taxon>
        <taxon>Pseudomonadota</taxon>
        <taxon>Gammaproteobacteria</taxon>
        <taxon>Enterobacterales</taxon>
        <taxon>Yersiniaceae</taxon>
        <taxon>Yersinia</taxon>
    </lineage>
</organism>
<name>RAVA_YERPY</name>
<accession>B1JR27</accession>
<feature type="chain" id="PRO_1000186139" description="Regulatory ATPase RavA">
    <location>
        <begin position="1"/>
        <end position="512"/>
    </location>
</feature>
<feature type="binding site" evidence="1">
    <location>
        <position position="23"/>
    </location>
    <ligand>
        <name>ADP</name>
        <dbReference type="ChEBI" id="CHEBI:456216"/>
    </ligand>
</feature>
<feature type="binding site" evidence="1">
    <location>
        <position position="49"/>
    </location>
    <ligand>
        <name>ADP</name>
        <dbReference type="ChEBI" id="CHEBI:456216"/>
    </ligand>
</feature>
<feature type="binding site" evidence="1">
    <location>
        <position position="50"/>
    </location>
    <ligand>
        <name>ADP</name>
        <dbReference type="ChEBI" id="CHEBI:456216"/>
    </ligand>
</feature>
<feature type="binding site" evidence="1">
    <location>
        <position position="51"/>
    </location>
    <ligand>
        <name>ADP</name>
        <dbReference type="ChEBI" id="CHEBI:456216"/>
    </ligand>
</feature>
<feature type="binding site" evidence="1">
    <location>
        <position position="52"/>
    </location>
    <ligand>
        <name>ADP</name>
        <dbReference type="ChEBI" id="CHEBI:456216"/>
    </ligand>
</feature>
<feature type="binding site" evidence="1">
    <location>
        <position position="53"/>
    </location>
    <ligand>
        <name>ADP</name>
        <dbReference type="ChEBI" id="CHEBI:456216"/>
    </ligand>
</feature>
<feature type="binding site" evidence="1">
    <location>
        <position position="54"/>
    </location>
    <ligand>
        <name>ADP</name>
        <dbReference type="ChEBI" id="CHEBI:456216"/>
    </ligand>
</feature>
<feature type="binding site" evidence="1">
    <location>
        <position position="196"/>
    </location>
    <ligand>
        <name>ADP</name>
        <dbReference type="ChEBI" id="CHEBI:456216"/>
    </ligand>
</feature>
<evidence type="ECO:0000255" key="1">
    <source>
        <dbReference type="HAMAP-Rule" id="MF_01625"/>
    </source>
</evidence>
<keyword id="KW-0067">ATP-binding</keyword>
<keyword id="KW-0143">Chaperone</keyword>
<keyword id="KW-0963">Cytoplasm</keyword>
<keyword id="KW-0378">Hydrolase</keyword>
<keyword id="KW-0547">Nucleotide-binding</keyword>
<dbReference type="EC" id="3.6.1.-" evidence="1"/>
<dbReference type="EMBL" id="CP000950">
    <property type="protein sequence ID" value="ACA70468.1"/>
    <property type="molecule type" value="Genomic_DNA"/>
</dbReference>
<dbReference type="RefSeq" id="WP_011991003.1">
    <property type="nucleotide sequence ID" value="NZ_CP009792.1"/>
</dbReference>
<dbReference type="SMR" id="B1JR27"/>
<dbReference type="KEGG" id="ypy:YPK_4212"/>
<dbReference type="PATRIC" id="fig|502800.11.peg.562"/>
<dbReference type="GO" id="GO:0005737">
    <property type="term" value="C:cytoplasm"/>
    <property type="evidence" value="ECO:0007669"/>
    <property type="project" value="UniProtKB-SubCell"/>
</dbReference>
<dbReference type="GO" id="GO:0005524">
    <property type="term" value="F:ATP binding"/>
    <property type="evidence" value="ECO:0007669"/>
    <property type="project" value="UniProtKB-KW"/>
</dbReference>
<dbReference type="GO" id="GO:0016887">
    <property type="term" value="F:ATP hydrolysis activity"/>
    <property type="evidence" value="ECO:0007669"/>
    <property type="project" value="UniProtKB-UniRule"/>
</dbReference>
<dbReference type="CDD" id="cd00009">
    <property type="entry name" value="AAA"/>
    <property type="match status" value="1"/>
</dbReference>
<dbReference type="Gene3D" id="1.20.58.1510">
    <property type="match status" value="1"/>
</dbReference>
<dbReference type="Gene3D" id="2.40.128.430">
    <property type="match status" value="1"/>
</dbReference>
<dbReference type="Gene3D" id="3.40.50.300">
    <property type="entry name" value="P-loop containing nucleotide triphosphate hydrolases"/>
    <property type="match status" value="1"/>
</dbReference>
<dbReference type="HAMAP" id="MF_01625">
    <property type="entry name" value="ATPase_RavA"/>
    <property type="match status" value="1"/>
</dbReference>
<dbReference type="InterPro" id="IPR003593">
    <property type="entry name" value="AAA+_ATPase"/>
</dbReference>
<dbReference type="InterPro" id="IPR023671">
    <property type="entry name" value="ATPase_RavA"/>
</dbReference>
<dbReference type="InterPro" id="IPR022547">
    <property type="entry name" value="ATPase_RavA_C"/>
</dbReference>
<dbReference type="InterPro" id="IPR045427">
    <property type="entry name" value="MoxR"/>
</dbReference>
<dbReference type="InterPro" id="IPR027417">
    <property type="entry name" value="P-loop_NTPase"/>
</dbReference>
<dbReference type="InterPro" id="IPR041538">
    <property type="entry name" value="RavA-like_AAA_lid"/>
</dbReference>
<dbReference type="InterPro" id="IPR050513">
    <property type="entry name" value="RavA_ATPases"/>
</dbReference>
<dbReference type="InterPro" id="IPR046898">
    <property type="entry name" value="RavA_LARA_dom"/>
</dbReference>
<dbReference type="InterPro" id="IPR046932">
    <property type="entry name" value="RavA_LARA_sf"/>
</dbReference>
<dbReference type="NCBIfam" id="NF010054">
    <property type="entry name" value="PRK13531.1"/>
    <property type="match status" value="1"/>
</dbReference>
<dbReference type="PANTHER" id="PTHR32204">
    <property type="entry name" value="ATPASE RAVA"/>
    <property type="match status" value="1"/>
</dbReference>
<dbReference type="PANTHER" id="PTHR32204:SF0">
    <property type="entry name" value="ATPASE RAVA"/>
    <property type="match status" value="1"/>
</dbReference>
<dbReference type="Pfam" id="PF17868">
    <property type="entry name" value="AAA_lid_8"/>
    <property type="match status" value="1"/>
</dbReference>
<dbReference type="Pfam" id="PF12592">
    <property type="entry name" value="ATPase_RavA_C"/>
    <property type="match status" value="1"/>
</dbReference>
<dbReference type="Pfam" id="PF20030">
    <property type="entry name" value="bpMoxR"/>
    <property type="match status" value="1"/>
</dbReference>
<dbReference type="Pfam" id="PF20265">
    <property type="entry name" value="LARA_dom"/>
    <property type="match status" value="1"/>
</dbReference>
<dbReference type="SMART" id="SM00382">
    <property type="entry name" value="AAA"/>
    <property type="match status" value="1"/>
</dbReference>
<dbReference type="SUPFAM" id="SSF52540">
    <property type="entry name" value="P-loop containing nucleoside triphosphate hydrolases"/>
    <property type="match status" value="1"/>
</dbReference>
<reference key="1">
    <citation type="submission" date="2008-02" db="EMBL/GenBank/DDBJ databases">
        <title>Complete sequence of Yersinia pseudotuberculosis YPIII.</title>
        <authorList>
            <consortium name="US DOE Joint Genome Institute"/>
            <person name="Copeland A."/>
            <person name="Lucas S."/>
            <person name="Lapidus A."/>
            <person name="Glavina del Rio T."/>
            <person name="Dalin E."/>
            <person name="Tice H."/>
            <person name="Bruce D."/>
            <person name="Goodwin L."/>
            <person name="Pitluck S."/>
            <person name="Munk A.C."/>
            <person name="Brettin T."/>
            <person name="Detter J.C."/>
            <person name="Han C."/>
            <person name="Tapia R."/>
            <person name="Schmutz J."/>
            <person name="Larimer F."/>
            <person name="Land M."/>
            <person name="Hauser L."/>
            <person name="Challacombe J.F."/>
            <person name="Green L."/>
            <person name="Lindler L.E."/>
            <person name="Nikolich M.P."/>
            <person name="Richardson P."/>
        </authorList>
    </citation>
    <scope>NUCLEOTIDE SEQUENCE [LARGE SCALE GENOMIC DNA]</scope>
    <source>
        <strain>YPIII</strain>
    </source>
</reference>
<proteinExistence type="inferred from homology"/>
<protein>
    <recommendedName>
        <fullName evidence="1">Regulatory ATPase RavA</fullName>
        <ecNumber evidence="1">3.6.1.-</ecNumber>
    </recommendedName>
    <alternativeName>
        <fullName evidence="1">Regulatory ATPase variant A</fullName>
    </alternativeName>
</protein>
<comment type="function">
    <text evidence="1">Component of the RavA-ViaA chaperone complex, which may act on the membrane to optimize the function of some of the respiratory chains. RavA functions as an ATPase.</text>
</comment>
<comment type="catalytic activity">
    <reaction evidence="1">
        <text>ATP + H2O = ADP + phosphate + H(+)</text>
        <dbReference type="Rhea" id="RHEA:13065"/>
        <dbReference type="ChEBI" id="CHEBI:15377"/>
        <dbReference type="ChEBI" id="CHEBI:15378"/>
        <dbReference type="ChEBI" id="CHEBI:30616"/>
        <dbReference type="ChEBI" id="CHEBI:43474"/>
        <dbReference type="ChEBI" id="CHEBI:456216"/>
    </reaction>
</comment>
<comment type="activity regulation">
    <text evidence="1">ATPase activity is stimulated by ViaA.</text>
</comment>
<comment type="subunit">
    <text evidence="1">Homohexamer. Interacts with ViaA.</text>
</comment>
<comment type="subcellular location">
    <subcellularLocation>
        <location evidence="1">Cytoplasm</location>
    </subcellularLocation>
</comment>
<comment type="similarity">
    <text evidence="1">Belongs to the RavA family.</text>
</comment>